<dbReference type="EC" id="3.1.1.3"/>
<dbReference type="EMBL" id="X67712">
    <property type="protein sequence ID" value="CAA47949.1"/>
    <property type="molecule type" value="Genomic_DNA"/>
</dbReference>
<dbReference type="PIR" id="S57274">
    <property type="entry name" value="S57274"/>
</dbReference>
<dbReference type="PIR" id="S57275">
    <property type="entry name" value="S57275"/>
</dbReference>
<dbReference type="SMR" id="Q02104"/>
<dbReference type="ESTHER" id="psyim-1lip">
    <property type="family name" value="ABHD6-Lip"/>
</dbReference>
<dbReference type="GO" id="GO:0009279">
    <property type="term" value="C:cell outer membrane"/>
    <property type="evidence" value="ECO:0007669"/>
    <property type="project" value="UniProtKB-SubCell"/>
</dbReference>
<dbReference type="GO" id="GO:0047372">
    <property type="term" value="F:monoacylglycerol lipase activity"/>
    <property type="evidence" value="ECO:0007669"/>
    <property type="project" value="TreeGrafter"/>
</dbReference>
<dbReference type="GO" id="GO:0004806">
    <property type="term" value="F:triacylglycerol lipase activity"/>
    <property type="evidence" value="ECO:0007669"/>
    <property type="project" value="UniProtKB-EC"/>
</dbReference>
<dbReference type="GO" id="GO:0046464">
    <property type="term" value="P:acylglycerol catabolic process"/>
    <property type="evidence" value="ECO:0007669"/>
    <property type="project" value="TreeGrafter"/>
</dbReference>
<dbReference type="Gene3D" id="3.40.50.1820">
    <property type="entry name" value="alpha/beta hydrolase"/>
    <property type="match status" value="1"/>
</dbReference>
<dbReference type="InterPro" id="IPR000073">
    <property type="entry name" value="AB_hydrolase_1"/>
</dbReference>
<dbReference type="InterPro" id="IPR029058">
    <property type="entry name" value="AB_hydrolase_fold"/>
</dbReference>
<dbReference type="InterPro" id="IPR050266">
    <property type="entry name" value="AB_hydrolase_sf"/>
</dbReference>
<dbReference type="InterPro" id="IPR000639">
    <property type="entry name" value="Epox_hydrolase-like"/>
</dbReference>
<dbReference type="PANTHER" id="PTHR43798">
    <property type="entry name" value="MONOACYLGLYCEROL LIPASE"/>
    <property type="match status" value="1"/>
</dbReference>
<dbReference type="PANTHER" id="PTHR43798:SF5">
    <property type="entry name" value="MONOACYLGLYCEROL LIPASE ABHD6"/>
    <property type="match status" value="1"/>
</dbReference>
<dbReference type="Pfam" id="PF00561">
    <property type="entry name" value="Abhydrolase_1"/>
    <property type="match status" value="1"/>
</dbReference>
<dbReference type="PRINTS" id="PR00111">
    <property type="entry name" value="ABHYDROLASE"/>
</dbReference>
<dbReference type="PRINTS" id="PR00412">
    <property type="entry name" value="EPOXHYDRLASE"/>
</dbReference>
<dbReference type="SUPFAM" id="SSF53474">
    <property type="entry name" value="alpha/beta-Hydrolases"/>
    <property type="match status" value="1"/>
</dbReference>
<dbReference type="PROSITE" id="PS51257">
    <property type="entry name" value="PROKAR_LIPOPROTEIN"/>
    <property type="match status" value="1"/>
</dbReference>
<keyword id="KW-0998">Cell outer membrane</keyword>
<keyword id="KW-0378">Hydrolase</keyword>
<keyword id="KW-0442">Lipid degradation</keyword>
<keyword id="KW-0443">Lipid metabolism</keyword>
<keyword id="KW-0449">Lipoprotein</keyword>
<keyword id="KW-0472">Membrane</keyword>
<keyword id="KW-0564">Palmitate</keyword>
<keyword id="KW-0732">Signal</keyword>
<accession>Q02104</accession>
<name>LIP1_PSYIM</name>
<reference key="1">
    <citation type="journal article" date="1993" name="Biochim. Biophys. Acta">
        <title>Cloning, sequence and structural features of a lipase from the antarctic facultative psychrophile Psychrobacter immobilis B10.</title>
        <authorList>
            <person name="Arpigny J.L."/>
            <person name="Feller G."/>
            <person name="Gerday C."/>
        </authorList>
    </citation>
    <scope>NUCLEOTIDE SEQUENCE [GENOMIC DNA]</scope>
    <scope>CHARACTERIZATION</scope>
    <source>
        <strain>B10</strain>
    </source>
</reference>
<reference key="2">
    <citation type="journal article" date="1995" name="Biochim. Biophys. Acta">
        <authorList>
            <person name="Arpigny J.L."/>
            <person name="Feller G."/>
            <person name="Gerday C."/>
        </authorList>
    </citation>
    <scope>ERRATUM OF PUBMED:7916627</scope>
    <scope>SEQUENCE REVISION</scope>
</reference>
<evidence type="ECO:0000250" key="1"/>
<evidence type="ECO:0000255" key="2"/>
<evidence type="ECO:0000255" key="3">
    <source>
        <dbReference type="PROSITE-ProRule" id="PRU00303"/>
    </source>
</evidence>
<evidence type="ECO:0000305" key="4"/>
<comment type="catalytic activity">
    <reaction>
        <text>a triacylglycerol + H2O = a diacylglycerol + a fatty acid + H(+)</text>
        <dbReference type="Rhea" id="RHEA:12044"/>
        <dbReference type="ChEBI" id="CHEBI:15377"/>
        <dbReference type="ChEBI" id="CHEBI:15378"/>
        <dbReference type="ChEBI" id="CHEBI:17855"/>
        <dbReference type="ChEBI" id="CHEBI:18035"/>
        <dbReference type="ChEBI" id="CHEBI:28868"/>
        <dbReference type="EC" id="3.1.1.3"/>
    </reaction>
</comment>
<comment type="biophysicochemical properties">
    <temperatureDependence>
        <text>Active at temperatures close to 0 degree Celsius.</text>
    </temperatureDependence>
</comment>
<comment type="subcellular location">
    <subcellularLocation>
        <location evidence="4">Cell outer membrane</location>
        <topology evidence="3">Lipid-anchor</topology>
    </subcellularLocation>
</comment>
<sequence length="317" mass="35252">MLLKRLCFAALFSLSMVGCTNAPNALAVNTTQKIIQYERNKSDLEIKSLTLASGDKMVYAENGNVAGEPLLLIHGFGGNKDNFTRIARQLEGYHLIIPDLLGFGESSKPMSADYRSEAQRTRLHELLQAKGLASNIHVGGNSMGGAISVAYAAKYPKDVKSLWLVDSAGFWSAGIPKSLEGATLENNPLLIKSNEDFYKMYDFVMYKPPYLPKSVKAVFAQERIKNKELDAKILEQIVTDNVEERAKIIAQYKIPTLVVWGDKDQIIKPETVNLIKKIIPQAQVIMMEDVGHVPMVEALDETADNYKAFRSILEAQR</sequence>
<gene>
    <name type="primary">lip1</name>
</gene>
<feature type="signal peptide" evidence="3">
    <location>
        <begin position="1"/>
        <end position="18"/>
    </location>
</feature>
<feature type="chain" id="PRO_0000017730" description="Lipase 1">
    <location>
        <begin position="19"/>
        <end position="317"/>
    </location>
</feature>
<feature type="domain" description="AB hydrolase-1" evidence="2">
    <location>
        <begin position="69"/>
        <end position="296"/>
    </location>
</feature>
<feature type="active site" evidence="2">
    <location>
        <position position="74"/>
    </location>
</feature>
<feature type="active site" description="Nucleophile" evidence="1">
    <location>
        <position position="142"/>
    </location>
</feature>
<feature type="active site" description="Charge relay system" evidence="1">
    <location>
        <position position="270"/>
    </location>
</feature>
<feature type="active site" description="Charge relay system" evidence="1">
    <location>
        <position position="292"/>
    </location>
</feature>
<feature type="lipid moiety-binding region" description="N-palmitoyl cysteine" evidence="3">
    <location>
        <position position="19"/>
    </location>
</feature>
<feature type="lipid moiety-binding region" description="S-diacylglycerol cysteine" evidence="3">
    <location>
        <position position="19"/>
    </location>
</feature>
<organism>
    <name type="scientific">Psychrobacter immobilis</name>
    <dbReference type="NCBI Taxonomy" id="498"/>
    <lineage>
        <taxon>Bacteria</taxon>
        <taxon>Pseudomonadati</taxon>
        <taxon>Pseudomonadota</taxon>
        <taxon>Gammaproteobacteria</taxon>
        <taxon>Moraxellales</taxon>
        <taxon>Moraxellaceae</taxon>
        <taxon>Psychrobacter</taxon>
    </lineage>
</organism>
<protein>
    <recommendedName>
        <fullName>Lipase 1</fullName>
        <ecNumber>3.1.1.3</ecNumber>
    </recommendedName>
    <alternativeName>
        <fullName>Triacylglycerol lipase</fullName>
    </alternativeName>
</protein>
<proteinExistence type="evidence at protein level"/>